<reference key="1">
    <citation type="journal article" date="2000" name="Nature">
        <title>Sequence and analysis of chromosome 1 of the plant Arabidopsis thaliana.</title>
        <authorList>
            <person name="Theologis A."/>
            <person name="Ecker J.R."/>
            <person name="Palm C.J."/>
            <person name="Federspiel N.A."/>
            <person name="Kaul S."/>
            <person name="White O."/>
            <person name="Alonso J."/>
            <person name="Altafi H."/>
            <person name="Araujo R."/>
            <person name="Bowman C.L."/>
            <person name="Brooks S.Y."/>
            <person name="Buehler E."/>
            <person name="Chan A."/>
            <person name="Chao Q."/>
            <person name="Chen H."/>
            <person name="Cheuk R.F."/>
            <person name="Chin C.W."/>
            <person name="Chung M.K."/>
            <person name="Conn L."/>
            <person name="Conway A.B."/>
            <person name="Conway A.R."/>
            <person name="Creasy T.H."/>
            <person name="Dewar K."/>
            <person name="Dunn P."/>
            <person name="Etgu P."/>
            <person name="Feldblyum T.V."/>
            <person name="Feng J.-D."/>
            <person name="Fong B."/>
            <person name="Fujii C.Y."/>
            <person name="Gill J.E."/>
            <person name="Goldsmith A.D."/>
            <person name="Haas B."/>
            <person name="Hansen N.F."/>
            <person name="Hughes B."/>
            <person name="Huizar L."/>
            <person name="Hunter J.L."/>
            <person name="Jenkins J."/>
            <person name="Johnson-Hopson C."/>
            <person name="Khan S."/>
            <person name="Khaykin E."/>
            <person name="Kim C.J."/>
            <person name="Koo H.L."/>
            <person name="Kremenetskaia I."/>
            <person name="Kurtz D.B."/>
            <person name="Kwan A."/>
            <person name="Lam B."/>
            <person name="Langin-Hooper S."/>
            <person name="Lee A."/>
            <person name="Lee J.M."/>
            <person name="Lenz C.A."/>
            <person name="Li J.H."/>
            <person name="Li Y.-P."/>
            <person name="Lin X."/>
            <person name="Liu S.X."/>
            <person name="Liu Z.A."/>
            <person name="Luros J.S."/>
            <person name="Maiti R."/>
            <person name="Marziali A."/>
            <person name="Militscher J."/>
            <person name="Miranda M."/>
            <person name="Nguyen M."/>
            <person name="Nierman W.C."/>
            <person name="Osborne B.I."/>
            <person name="Pai G."/>
            <person name="Peterson J."/>
            <person name="Pham P.K."/>
            <person name="Rizzo M."/>
            <person name="Rooney T."/>
            <person name="Rowley D."/>
            <person name="Sakano H."/>
            <person name="Salzberg S.L."/>
            <person name="Schwartz J.R."/>
            <person name="Shinn P."/>
            <person name="Southwick A.M."/>
            <person name="Sun H."/>
            <person name="Tallon L.J."/>
            <person name="Tambunga G."/>
            <person name="Toriumi M.J."/>
            <person name="Town C.D."/>
            <person name="Utterback T."/>
            <person name="Van Aken S."/>
            <person name="Vaysberg M."/>
            <person name="Vysotskaia V.S."/>
            <person name="Walker M."/>
            <person name="Wu D."/>
            <person name="Yu G."/>
            <person name="Fraser C.M."/>
            <person name="Venter J.C."/>
            <person name="Davis R.W."/>
        </authorList>
    </citation>
    <scope>NUCLEOTIDE SEQUENCE [LARGE SCALE GENOMIC DNA]</scope>
    <source>
        <strain>cv. Columbia</strain>
    </source>
</reference>
<reference key="2">
    <citation type="journal article" date="2017" name="Plant J.">
        <title>Araport11: a complete reannotation of the Arabidopsis thaliana reference genome.</title>
        <authorList>
            <person name="Cheng C.Y."/>
            <person name="Krishnakumar V."/>
            <person name="Chan A.P."/>
            <person name="Thibaud-Nissen F."/>
            <person name="Schobel S."/>
            <person name="Town C.D."/>
        </authorList>
    </citation>
    <scope>GENOME REANNOTATION</scope>
    <source>
        <strain>cv. Columbia</strain>
    </source>
</reference>
<reference key="3">
    <citation type="journal article" date="2003" name="Science">
        <title>Empirical analysis of transcriptional activity in the Arabidopsis genome.</title>
        <authorList>
            <person name="Yamada K."/>
            <person name="Lim J."/>
            <person name="Dale J.M."/>
            <person name="Chen H."/>
            <person name="Shinn P."/>
            <person name="Palm C.J."/>
            <person name="Southwick A.M."/>
            <person name="Wu H.C."/>
            <person name="Kim C.J."/>
            <person name="Nguyen M."/>
            <person name="Pham P.K."/>
            <person name="Cheuk R.F."/>
            <person name="Karlin-Newmann G."/>
            <person name="Liu S.X."/>
            <person name="Lam B."/>
            <person name="Sakano H."/>
            <person name="Wu T."/>
            <person name="Yu G."/>
            <person name="Miranda M."/>
            <person name="Quach H.L."/>
            <person name="Tripp M."/>
            <person name="Chang C.H."/>
            <person name="Lee J.M."/>
            <person name="Toriumi M.J."/>
            <person name="Chan M.M."/>
            <person name="Tang C.C."/>
            <person name="Onodera C.S."/>
            <person name="Deng J.M."/>
            <person name="Akiyama K."/>
            <person name="Ansari Y."/>
            <person name="Arakawa T."/>
            <person name="Banh J."/>
            <person name="Banno F."/>
            <person name="Bowser L."/>
            <person name="Brooks S.Y."/>
            <person name="Carninci P."/>
            <person name="Chao Q."/>
            <person name="Choy N."/>
            <person name="Enju A."/>
            <person name="Goldsmith A.D."/>
            <person name="Gurjal M."/>
            <person name="Hansen N.F."/>
            <person name="Hayashizaki Y."/>
            <person name="Johnson-Hopson C."/>
            <person name="Hsuan V.W."/>
            <person name="Iida K."/>
            <person name="Karnes M."/>
            <person name="Khan S."/>
            <person name="Koesema E."/>
            <person name="Ishida J."/>
            <person name="Jiang P.X."/>
            <person name="Jones T."/>
            <person name="Kawai J."/>
            <person name="Kamiya A."/>
            <person name="Meyers C."/>
            <person name="Nakajima M."/>
            <person name="Narusaka M."/>
            <person name="Seki M."/>
            <person name="Sakurai T."/>
            <person name="Satou M."/>
            <person name="Tamse R."/>
            <person name="Vaysberg M."/>
            <person name="Wallender E.K."/>
            <person name="Wong C."/>
            <person name="Yamamura Y."/>
            <person name="Yuan S."/>
            <person name="Shinozaki K."/>
            <person name="Davis R.W."/>
            <person name="Theologis A."/>
            <person name="Ecker J.R."/>
        </authorList>
    </citation>
    <scope>NUCLEOTIDE SEQUENCE [LARGE SCALE MRNA]</scope>
    <source>
        <strain>cv. Columbia</strain>
    </source>
</reference>
<reference key="4">
    <citation type="submission" date="1997-01" db="EMBL/GenBank/DDBJ databases">
        <title>Identification of an Arabidopsis gene encoding a protein with high similarity to a Zea mays leaf permease.</title>
        <authorList>
            <person name="Sprenger M."/>
            <person name="Weisshaar B."/>
        </authorList>
    </citation>
    <scope>NUCLEOTIDE SEQUENCE [GENOMIC DNA] OF 1-263</scope>
    <source>
        <strain>cv. Columbia</strain>
    </source>
</reference>
<reference key="5">
    <citation type="journal article" date="2006" name="Plant Cell Physiol.">
        <title>Identification and expression analysis of twelve members of the nucleobase-ascorbate transporter (NAT) gene family in Arabidopsis thaliana.</title>
        <authorList>
            <person name="Maurino V.G."/>
            <person name="Grube E."/>
            <person name="Zielinski J."/>
            <person name="Schild A."/>
            <person name="Fischer K."/>
            <person name="Flugge U.-I."/>
        </authorList>
    </citation>
    <scope>GENE FAMILY</scope>
    <scope>TISSUE SPECIFICITY</scope>
</reference>
<dbReference type="EMBL" id="AC015445">
    <property type="protein sequence ID" value="AAF76447.1"/>
    <property type="status" value="ALT_SEQ"/>
    <property type="molecule type" value="Genomic_DNA"/>
</dbReference>
<dbReference type="EMBL" id="CP002684">
    <property type="protein sequence ID" value="AEE32500.1"/>
    <property type="molecule type" value="Genomic_DNA"/>
</dbReference>
<dbReference type="EMBL" id="AY056808">
    <property type="protein sequence ID" value="AAL10499.1"/>
    <property type="molecule type" value="mRNA"/>
</dbReference>
<dbReference type="EMBL" id="AY099842">
    <property type="protein sequence ID" value="AAM20693.1"/>
    <property type="molecule type" value="mRNA"/>
</dbReference>
<dbReference type="EMBL" id="BT000337">
    <property type="protein sequence ID" value="AAN15656.1"/>
    <property type="molecule type" value="mRNA"/>
</dbReference>
<dbReference type="EMBL" id="U83501">
    <property type="protein sequence ID" value="AAB41234.1"/>
    <property type="status" value="ALT_SEQ"/>
    <property type="molecule type" value="Genomic_DNA"/>
</dbReference>
<dbReference type="PIR" id="A96536">
    <property type="entry name" value="A96536"/>
</dbReference>
<dbReference type="RefSeq" id="NP_175418.1">
    <property type="nucleotide sequence ID" value="NM_103883.2"/>
</dbReference>
<dbReference type="SMR" id="P93039"/>
<dbReference type="FunCoup" id="P93039">
    <property type="interactions" value="565"/>
</dbReference>
<dbReference type="STRING" id="3702.P93039"/>
<dbReference type="PaxDb" id="3702-AT1G49960.1"/>
<dbReference type="ProteomicsDB" id="251094"/>
<dbReference type="EnsemblPlants" id="AT1G49960.1">
    <property type="protein sequence ID" value="AT1G49960.1"/>
    <property type="gene ID" value="AT1G49960"/>
</dbReference>
<dbReference type="GeneID" id="841419"/>
<dbReference type="Gramene" id="AT1G49960.1">
    <property type="protein sequence ID" value="AT1G49960.1"/>
    <property type="gene ID" value="AT1G49960"/>
</dbReference>
<dbReference type="KEGG" id="ath:AT1G49960"/>
<dbReference type="Araport" id="AT1G49960"/>
<dbReference type="TAIR" id="AT1G49960"/>
<dbReference type="eggNOG" id="KOG1292">
    <property type="taxonomic scope" value="Eukaryota"/>
</dbReference>
<dbReference type="HOGENOM" id="CLU_017959_5_3_1"/>
<dbReference type="InParanoid" id="P93039"/>
<dbReference type="OMA" id="QHIAAMY"/>
<dbReference type="OrthoDB" id="1641903at2759"/>
<dbReference type="PhylomeDB" id="P93039"/>
<dbReference type="PRO" id="PR:P93039"/>
<dbReference type="Proteomes" id="UP000006548">
    <property type="component" value="Chromosome 1"/>
</dbReference>
<dbReference type="ExpressionAtlas" id="P93039">
    <property type="expression patterns" value="baseline and differential"/>
</dbReference>
<dbReference type="GO" id="GO:0016020">
    <property type="term" value="C:membrane"/>
    <property type="evidence" value="ECO:0007669"/>
    <property type="project" value="UniProtKB-SubCell"/>
</dbReference>
<dbReference type="GO" id="GO:0022857">
    <property type="term" value="F:transmembrane transporter activity"/>
    <property type="evidence" value="ECO:0007669"/>
    <property type="project" value="InterPro"/>
</dbReference>
<dbReference type="InterPro" id="IPR006043">
    <property type="entry name" value="NCS2"/>
</dbReference>
<dbReference type="NCBIfam" id="NF037981">
    <property type="entry name" value="NCS2_1"/>
    <property type="match status" value="1"/>
</dbReference>
<dbReference type="PANTHER" id="PTHR11119">
    <property type="entry name" value="XANTHINE-URACIL / VITAMIN C PERMEASE FAMILY MEMBER"/>
    <property type="match status" value="1"/>
</dbReference>
<dbReference type="Pfam" id="PF00860">
    <property type="entry name" value="Xan_ur_permease"/>
    <property type="match status" value="1"/>
</dbReference>
<protein>
    <recommendedName>
        <fullName>Nucleobase-ascorbate transporter 4</fullName>
        <shortName>AtNAT4</shortName>
        <shortName>AtPER</shortName>
    </recommendedName>
</protein>
<feature type="chain" id="PRO_0000270161" description="Nucleobase-ascorbate transporter 4">
    <location>
        <begin position="1"/>
        <end position="526"/>
    </location>
</feature>
<feature type="transmembrane region" description="Helical" evidence="1">
    <location>
        <begin position="42"/>
        <end position="62"/>
    </location>
</feature>
<feature type="transmembrane region" description="Helical" evidence="1">
    <location>
        <begin position="69"/>
        <end position="89"/>
    </location>
</feature>
<feature type="transmembrane region" description="Helical" evidence="1">
    <location>
        <begin position="91"/>
        <end position="111"/>
    </location>
</feature>
<feature type="transmembrane region" description="Helical" evidence="1">
    <location>
        <begin position="131"/>
        <end position="151"/>
    </location>
</feature>
<feature type="transmembrane region" description="Helical" evidence="1">
    <location>
        <begin position="157"/>
        <end position="177"/>
    </location>
</feature>
<feature type="transmembrane region" description="Helical" evidence="1">
    <location>
        <begin position="186"/>
        <end position="206"/>
    </location>
</feature>
<feature type="transmembrane region" description="Helical" evidence="1">
    <location>
        <begin position="217"/>
        <end position="237"/>
    </location>
</feature>
<feature type="transmembrane region" description="Helical" evidence="1">
    <location>
        <begin position="282"/>
        <end position="302"/>
    </location>
</feature>
<feature type="transmembrane region" description="Helical" evidence="1">
    <location>
        <begin position="359"/>
        <end position="381"/>
    </location>
</feature>
<feature type="transmembrane region" description="Helical" evidence="1">
    <location>
        <begin position="388"/>
        <end position="410"/>
    </location>
</feature>
<feature type="transmembrane region" description="Helical" evidence="1">
    <location>
        <begin position="420"/>
        <end position="440"/>
    </location>
</feature>
<feature type="transmembrane region" description="Helical" evidence="1">
    <location>
        <begin position="457"/>
        <end position="477"/>
    </location>
</feature>
<gene>
    <name type="primary">NAT4</name>
    <name type="ordered locus">At1g49960</name>
    <name type="ORF">F2J10.14</name>
    <name type="ORF">F2J10.15</name>
</gene>
<proteinExistence type="evidence at transcript level"/>
<organism>
    <name type="scientific">Arabidopsis thaliana</name>
    <name type="common">Mouse-ear cress</name>
    <dbReference type="NCBI Taxonomy" id="3702"/>
    <lineage>
        <taxon>Eukaryota</taxon>
        <taxon>Viridiplantae</taxon>
        <taxon>Streptophyta</taxon>
        <taxon>Embryophyta</taxon>
        <taxon>Tracheophyta</taxon>
        <taxon>Spermatophyta</taxon>
        <taxon>Magnoliopsida</taxon>
        <taxon>eudicotyledons</taxon>
        <taxon>Gunneridae</taxon>
        <taxon>Pentapetalae</taxon>
        <taxon>rosids</taxon>
        <taxon>malvids</taxon>
        <taxon>Brassicales</taxon>
        <taxon>Brassicaceae</taxon>
        <taxon>Camelineae</taxon>
        <taxon>Arabidopsis</taxon>
    </lineage>
</organism>
<comment type="subcellular location">
    <subcellularLocation>
        <location evidence="3">Membrane</location>
        <topology evidence="3">Multi-pass membrane protein</topology>
    </subcellularLocation>
</comment>
<comment type="tissue specificity">
    <text evidence="2">Highly expressed in the root central cylinder. Expressed in the filaments and stigmatic papillae of pollinated flowers and developing siliques.</text>
</comment>
<comment type="similarity">
    <text evidence="3">Belongs to the nucleobase:cation symporter-2 (NCS2) (TC 2.A.40) family.</text>
</comment>
<comment type="sequence caution" evidence="3">
    <conflict type="erroneous gene model prediction">
        <sequence resource="EMBL-CDS" id="AAB41234"/>
    </conflict>
</comment>
<comment type="sequence caution" evidence="3">
    <conflict type="erroneous gene model prediction">
        <sequence resource="EMBL-CDS" id="AAF76447"/>
    </conflict>
</comment>
<sequence length="526" mass="57818">MATKTDDFAPFPVKDQLPGVEFCVSSSPNWPEGIVLGFQHYIVMLGTTVIIPSILVPLMGGGDVEKAEVINTVLFVSGINTLLQSLFGSRLPVVMGASYAYLIPALYITFSYRFTYYLHPHLRFEETMRAIQGALIIASISHMIMGFFGLWRILVRFLSPLSAAPLVILTGVGLLAFAFPQLARCIEIGLPALIILIILSQYLPHLFKCKRSICEQFAVLFTIAIVWAYAEILTAAGAYDKRPDNTQLSCRTDRSGLISASPWVRIPYPLQWGRPSFHGSDAFAMMAATYVAIVETTGSFIAASRFGSATHIPPSVLSRGIGWQGIGVLLNGLFGTATGSTALVENTGLLGLTKVGSRRVVQISAGFMIFFSIFGKFGAVLASIPLPIFAALYCVLFAYVASAGLGLLQFCNLNSFRNKFILGFSIFIGLSVAQYFTEYLFISGRGPVHTRTSAFNVIMQVIFSSAATVGIMAAFLLDCTHSYGHASVRRDSGRHWWEKFRVYHTDTRTEEFYALPYNLNRFFPSF</sequence>
<name>NAT4_ARATH</name>
<evidence type="ECO:0000255" key="1"/>
<evidence type="ECO:0000269" key="2">
    <source>
    </source>
</evidence>
<evidence type="ECO:0000305" key="3"/>
<keyword id="KW-0472">Membrane</keyword>
<keyword id="KW-1185">Reference proteome</keyword>
<keyword id="KW-0812">Transmembrane</keyword>
<keyword id="KW-1133">Transmembrane helix</keyword>
<keyword id="KW-0813">Transport</keyword>
<accession>P93039</accession>
<accession>Q93ZL2</accession>
<accession>Q9LPM0</accession>